<proteinExistence type="evidence at protein level"/>
<gene>
    <name type="primary">ANKS1B</name>
</gene>
<accession>Q7Z6G8</accession>
<accession>A5PKY5</accession>
<accession>A7E259</accession>
<accession>A8K153</accession>
<accession>A8MSN4</accession>
<accession>B4DFP6</accession>
<accession>B4DH98</accession>
<accession>F8VPM3</accession>
<accession>F8VZR9</accession>
<accession>F8WC27</accession>
<accession>Q5XLJ0</accession>
<accession>Q6IVB5</accession>
<accession>Q6NUS4</accession>
<accession>Q7Z6G6</accession>
<accession>Q7Z6G7</accession>
<accession>Q8TAP3</accession>
<accession>Q9NRX7</accession>
<accession>Q9Y5K9</accession>
<reference key="1">
    <citation type="journal article" date="2004" name="J. Alzheimers Dis.">
        <title>The intracellular localization of amyloid beta protein precursor (AbetaPP) intracellular domain associated protein-1 (AIDA-1) is regulated by AbetaPP and alternative splicing.</title>
        <authorList>
            <person name="Ghersi E."/>
            <person name="Vito P."/>
            <person name="Lopez P."/>
            <person name="Abdallah M."/>
            <person name="D'Adamio L."/>
        </authorList>
    </citation>
    <scope>NUCLEOTIDE SEQUENCE [MRNA] (ISOFORMS 1; 6 AND 4)</scope>
    <scope>INTERACTION WITH APP</scope>
    <scope>SUBCELLULAR LOCATION</scope>
    <source>
        <tissue>Fetal brain</tissue>
    </source>
</reference>
<reference key="2">
    <citation type="journal article" date="2005" name="BMC Cell Biol.">
        <title>A novel EB-1/AIDA-1 isoform, AIDA-1c, interacts with the Cajal body protein coilin.</title>
        <authorList>
            <person name="Xu H."/>
            <person name="Hebert M.D."/>
        </authorList>
    </citation>
    <scope>NUCLEOTIDE SEQUENCE [MRNA] (ISOFORM 2)</scope>
    <scope>FUNCTION</scope>
    <scope>INTERACTION WITH COIL</scope>
    <scope>SUBCELLULAR LOCATION</scope>
    <source>
        <tissue>Brain</tissue>
    </source>
</reference>
<reference key="3">
    <citation type="journal article" date="2000" name="Proc. Natl. Acad. Sci. U.S.A.">
        <title>Gene expression profiling in the human hypothalamus-pituitary-adrenal axis and full-length cDNA cloning.</title>
        <authorList>
            <person name="Hu R.-M."/>
            <person name="Han Z.-G."/>
            <person name="Song H.-D."/>
            <person name="Peng Y.-D."/>
            <person name="Huang Q.-H."/>
            <person name="Ren S.-X."/>
            <person name="Gu Y.-J."/>
            <person name="Huang C.-H."/>
            <person name="Li Y.-B."/>
            <person name="Jiang C.-L."/>
            <person name="Fu G."/>
            <person name="Zhang Q.-H."/>
            <person name="Gu B.-W."/>
            <person name="Dai M."/>
            <person name="Mao Y.-F."/>
            <person name="Gao G.-F."/>
            <person name="Rong R."/>
            <person name="Ye M."/>
            <person name="Zhou J."/>
            <person name="Xu S.-H."/>
            <person name="Gu J."/>
            <person name="Shi J.-X."/>
            <person name="Jin W.-R."/>
            <person name="Zhang C.-K."/>
            <person name="Wu T.-M."/>
            <person name="Huang G.-Y."/>
            <person name="Chen Z."/>
            <person name="Chen M.-D."/>
            <person name="Chen J.-L."/>
        </authorList>
    </citation>
    <scope>NUCLEOTIDE SEQUENCE [LARGE SCALE MRNA] (ISOFORM 7)</scope>
    <source>
        <tissue>Adrenal gland</tissue>
    </source>
</reference>
<reference key="4">
    <citation type="journal article" date="2004" name="Nat. Genet.">
        <title>Complete sequencing and characterization of 21,243 full-length human cDNAs.</title>
        <authorList>
            <person name="Ota T."/>
            <person name="Suzuki Y."/>
            <person name="Nishikawa T."/>
            <person name="Otsuki T."/>
            <person name="Sugiyama T."/>
            <person name="Irie R."/>
            <person name="Wakamatsu A."/>
            <person name="Hayashi K."/>
            <person name="Sato H."/>
            <person name="Nagai K."/>
            <person name="Kimura K."/>
            <person name="Makita H."/>
            <person name="Sekine M."/>
            <person name="Obayashi M."/>
            <person name="Nishi T."/>
            <person name="Shibahara T."/>
            <person name="Tanaka T."/>
            <person name="Ishii S."/>
            <person name="Yamamoto J."/>
            <person name="Saito K."/>
            <person name="Kawai Y."/>
            <person name="Isono Y."/>
            <person name="Nakamura Y."/>
            <person name="Nagahari K."/>
            <person name="Murakami K."/>
            <person name="Yasuda T."/>
            <person name="Iwayanagi T."/>
            <person name="Wagatsuma M."/>
            <person name="Shiratori A."/>
            <person name="Sudo H."/>
            <person name="Hosoiri T."/>
            <person name="Kaku Y."/>
            <person name="Kodaira H."/>
            <person name="Kondo H."/>
            <person name="Sugawara M."/>
            <person name="Takahashi M."/>
            <person name="Kanda K."/>
            <person name="Yokoi T."/>
            <person name="Furuya T."/>
            <person name="Kikkawa E."/>
            <person name="Omura Y."/>
            <person name="Abe K."/>
            <person name="Kamihara K."/>
            <person name="Katsuta N."/>
            <person name="Sato K."/>
            <person name="Tanikawa M."/>
            <person name="Yamazaki M."/>
            <person name="Ninomiya K."/>
            <person name="Ishibashi T."/>
            <person name="Yamashita H."/>
            <person name="Murakawa K."/>
            <person name="Fujimori K."/>
            <person name="Tanai H."/>
            <person name="Kimata M."/>
            <person name="Watanabe M."/>
            <person name="Hiraoka S."/>
            <person name="Chiba Y."/>
            <person name="Ishida S."/>
            <person name="Ono Y."/>
            <person name="Takiguchi S."/>
            <person name="Watanabe S."/>
            <person name="Yosida M."/>
            <person name="Hotuta T."/>
            <person name="Kusano J."/>
            <person name="Kanehori K."/>
            <person name="Takahashi-Fujii A."/>
            <person name="Hara H."/>
            <person name="Tanase T.-O."/>
            <person name="Nomura Y."/>
            <person name="Togiya S."/>
            <person name="Komai F."/>
            <person name="Hara R."/>
            <person name="Takeuchi K."/>
            <person name="Arita M."/>
            <person name="Imose N."/>
            <person name="Musashino K."/>
            <person name="Yuuki H."/>
            <person name="Oshima A."/>
            <person name="Sasaki N."/>
            <person name="Aotsuka S."/>
            <person name="Yoshikawa Y."/>
            <person name="Matsunawa H."/>
            <person name="Ichihara T."/>
            <person name="Shiohata N."/>
            <person name="Sano S."/>
            <person name="Moriya S."/>
            <person name="Momiyama H."/>
            <person name="Satoh N."/>
            <person name="Takami S."/>
            <person name="Terashima Y."/>
            <person name="Suzuki O."/>
            <person name="Nakagawa S."/>
            <person name="Senoh A."/>
            <person name="Mizoguchi H."/>
            <person name="Goto Y."/>
            <person name="Shimizu F."/>
            <person name="Wakebe H."/>
            <person name="Hishigaki H."/>
            <person name="Watanabe T."/>
            <person name="Sugiyama A."/>
            <person name="Takemoto M."/>
            <person name="Kawakami B."/>
            <person name="Yamazaki M."/>
            <person name="Watanabe K."/>
            <person name="Kumagai A."/>
            <person name="Itakura S."/>
            <person name="Fukuzumi Y."/>
            <person name="Fujimori Y."/>
            <person name="Komiyama M."/>
            <person name="Tashiro H."/>
            <person name="Tanigami A."/>
            <person name="Fujiwara T."/>
            <person name="Ono T."/>
            <person name="Yamada K."/>
            <person name="Fujii Y."/>
            <person name="Ozaki K."/>
            <person name="Hirao M."/>
            <person name="Ohmori Y."/>
            <person name="Kawabata A."/>
            <person name="Hikiji T."/>
            <person name="Kobatake N."/>
            <person name="Inagaki H."/>
            <person name="Ikema Y."/>
            <person name="Okamoto S."/>
            <person name="Okitani R."/>
            <person name="Kawakami T."/>
            <person name="Noguchi S."/>
            <person name="Itoh T."/>
            <person name="Shigeta K."/>
            <person name="Senba T."/>
            <person name="Matsumura K."/>
            <person name="Nakajima Y."/>
            <person name="Mizuno T."/>
            <person name="Morinaga M."/>
            <person name="Sasaki M."/>
            <person name="Togashi T."/>
            <person name="Oyama M."/>
            <person name="Hata H."/>
            <person name="Watanabe M."/>
            <person name="Komatsu T."/>
            <person name="Mizushima-Sugano J."/>
            <person name="Satoh T."/>
            <person name="Shirai Y."/>
            <person name="Takahashi Y."/>
            <person name="Nakagawa K."/>
            <person name="Okumura K."/>
            <person name="Nagase T."/>
            <person name="Nomura N."/>
            <person name="Kikuchi H."/>
            <person name="Masuho Y."/>
            <person name="Yamashita R."/>
            <person name="Nakai K."/>
            <person name="Yada T."/>
            <person name="Nakamura Y."/>
            <person name="Ohara O."/>
            <person name="Isogai T."/>
            <person name="Sugano S."/>
        </authorList>
    </citation>
    <scope>NUCLEOTIDE SEQUENCE [LARGE SCALE MRNA] (ISOFORMS 3; 9 AND 10)</scope>
    <source>
        <tissue>Amygdala</tissue>
        <tissue>Brain</tissue>
    </source>
</reference>
<reference key="5">
    <citation type="journal article" date="2006" name="Nature">
        <title>The finished DNA sequence of human chromosome 12.</title>
        <authorList>
            <person name="Scherer S.E."/>
            <person name="Muzny D.M."/>
            <person name="Buhay C.J."/>
            <person name="Chen R."/>
            <person name="Cree A."/>
            <person name="Ding Y."/>
            <person name="Dugan-Rocha S."/>
            <person name="Gill R."/>
            <person name="Gunaratne P."/>
            <person name="Harris R.A."/>
            <person name="Hawes A.C."/>
            <person name="Hernandez J."/>
            <person name="Hodgson A.V."/>
            <person name="Hume J."/>
            <person name="Jackson A."/>
            <person name="Khan Z.M."/>
            <person name="Kovar-Smith C."/>
            <person name="Lewis L.R."/>
            <person name="Lozado R.J."/>
            <person name="Metzker M.L."/>
            <person name="Milosavljevic A."/>
            <person name="Miner G.R."/>
            <person name="Montgomery K.T."/>
            <person name="Morgan M.B."/>
            <person name="Nazareth L.V."/>
            <person name="Scott G."/>
            <person name="Sodergren E."/>
            <person name="Song X.-Z."/>
            <person name="Steffen D."/>
            <person name="Lovering R.C."/>
            <person name="Wheeler D.A."/>
            <person name="Worley K.C."/>
            <person name="Yuan Y."/>
            <person name="Zhang Z."/>
            <person name="Adams C.Q."/>
            <person name="Ansari-Lari M.A."/>
            <person name="Ayele M."/>
            <person name="Brown M.J."/>
            <person name="Chen G."/>
            <person name="Chen Z."/>
            <person name="Clerc-Blankenburg K.P."/>
            <person name="Davis C."/>
            <person name="Delgado O."/>
            <person name="Dinh H.H."/>
            <person name="Draper H."/>
            <person name="Gonzalez-Garay M.L."/>
            <person name="Havlak P."/>
            <person name="Jackson L.R."/>
            <person name="Jacob L.S."/>
            <person name="Kelly S.H."/>
            <person name="Li L."/>
            <person name="Li Z."/>
            <person name="Liu J."/>
            <person name="Liu W."/>
            <person name="Lu J."/>
            <person name="Maheshwari M."/>
            <person name="Nguyen B.-V."/>
            <person name="Okwuonu G.O."/>
            <person name="Pasternak S."/>
            <person name="Perez L.M."/>
            <person name="Plopper F.J.H."/>
            <person name="Santibanez J."/>
            <person name="Shen H."/>
            <person name="Tabor P.E."/>
            <person name="Verduzco D."/>
            <person name="Waldron L."/>
            <person name="Wang Q."/>
            <person name="Williams G.A."/>
            <person name="Zhang J."/>
            <person name="Zhou J."/>
            <person name="Allen C.C."/>
            <person name="Amin A.G."/>
            <person name="Anyalebechi V."/>
            <person name="Bailey M."/>
            <person name="Barbaria J.A."/>
            <person name="Bimage K.E."/>
            <person name="Bryant N.P."/>
            <person name="Burch P.E."/>
            <person name="Burkett C.E."/>
            <person name="Burrell K.L."/>
            <person name="Calderon E."/>
            <person name="Cardenas V."/>
            <person name="Carter K."/>
            <person name="Casias K."/>
            <person name="Cavazos I."/>
            <person name="Cavazos S.R."/>
            <person name="Ceasar H."/>
            <person name="Chacko J."/>
            <person name="Chan S.N."/>
            <person name="Chavez D."/>
            <person name="Christopoulos C."/>
            <person name="Chu J."/>
            <person name="Cockrell R."/>
            <person name="Cox C.D."/>
            <person name="Dang M."/>
            <person name="Dathorne S.R."/>
            <person name="David R."/>
            <person name="Davis C.M."/>
            <person name="Davy-Carroll L."/>
            <person name="Deshazo D.R."/>
            <person name="Donlin J.E."/>
            <person name="D'Souza L."/>
            <person name="Eaves K.A."/>
            <person name="Egan A."/>
            <person name="Emery-Cohen A.J."/>
            <person name="Escotto M."/>
            <person name="Flagg N."/>
            <person name="Forbes L.D."/>
            <person name="Gabisi A.M."/>
            <person name="Garza M."/>
            <person name="Hamilton C."/>
            <person name="Henderson N."/>
            <person name="Hernandez O."/>
            <person name="Hines S."/>
            <person name="Hogues M.E."/>
            <person name="Huang M."/>
            <person name="Idlebird D.G."/>
            <person name="Johnson R."/>
            <person name="Jolivet A."/>
            <person name="Jones S."/>
            <person name="Kagan R."/>
            <person name="King L.M."/>
            <person name="Leal B."/>
            <person name="Lebow H."/>
            <person name="Lee S."/>
            <person name="LeVan J.M."/>
            <person name="Lewis L.C."/>
            <person name="London P."/>
            <person name="Lorensuhewa L.M."/>
            <person name="Loulseged H."/>
            <person name="Lovett D.A."/>
            <person name="Lucier A."/>
            <person name="Lucier R.L."/>
            <person name="Ma J."/>
            <person name="Madu R.C."/>
            <person name="Mapua P."/>
            <person name="Martindale A.D."/>
            <person name="Martinez E."/>
            <person name="Massey E."/>
            <person name="Mawhiney S."/>
            <person name="Meador M.G."/>
            <person name="Mendez S."/>
            <person name="Mercado C."/>
            <person name="Mercado I.C."/>
            <person name="Merritt C.E."/>
            <person name="Miner Z.L."/>
            <person name="Minja E."/>
            <person name="Mitchell T."/>
            <person name="Mohabbat F."/>
            <person name="Mohabbat K."/>
            <person name="Montgomery B."/>
            <person name="Moore N."/>
            <person name="Morris S."/>
            <person name="Munidasa M."/>
            <person name="Ngo R.N."/>
            <person name="Nguyen N.B."/>
            <person name="Nickerson E."/>
            <person name="Nwaokelemeh O.O."/>
            <person name="Nwokenkwo S."/>
            <person name="Obregon M."/>
            <person name="Oguh M."/>
            <person name="Oragunye N."/>
            <person name="Oviedo R.J."/>
            <person name="Parish B.J."/>
            <person name="Parker D.N."/>
            <person name="Parrish J."/>
            <person name="Parks K.L."/>
            <person name="Paul H.A."/>
            <person name="Payton B.A."/>
            <person name="Perez A."/>
            <person name="Perrin W."/>
            <person name="Pickens A."/>
            <person name="Primus E.L."/>
            <person name="Pu L.-L."/>
            <person name="Puazo M."/>
            <person name="Quiles M.M."/>
            <person name="Quiroz J.B."/>
            <person name="Rabata D."/>
            <person name="Reeves K."/>
            <person name="Ruiz S.J."/>
            <person name="Shao H."/>
            <person name="Sisson I."/>
            <person name="Sonaike T."/>
            <person name="Sorelle R.P."/>
            <person name="Sutton A.E."/>
            <person name="Svatek A.F."/>
            <person name="Svetz L.A."/>
            <person name="Tamerisa K.S."/>
            <person name="Taylor T.R."/>
            <person name="Teague B."/>
            <person name="Thomas N."/>
            <person name="Thorn R.D."/>
            <person name="Trejos Z.Y."/>
            <person name="Trevino B.K."/>
            <person name="Ukegbu O.N."/>
            <person name="Urban J.B."/>
            <person name="Vasquez L.I."/>
            <person name="Vera V.A."/>
            <person name="Villasana D.M."/>
            <person name="Wang L."/>
            <person name="Ward-Moore S."/>
            <person name="Warren J.T."/>
            <person name="Wei X."/>
            <person name="White F."/>
            <person name="Williamson A.L."/>
            <person name="Wleczyk R."/>
            <person name="Wooden H.S."/>
            <person name="Wooden S.H."/>
            <person name="Yen J."/>
            <person name="Yoon L."/>
            <person name="Yoon V."/>
            <person name="Zorrilla S.E."/>
            <person name="Nelson D."/>
            <person name="Kucherlapati R."/>
            <person name="Weinstock G."/>
            <person name="Gibbs R.A."/>
        </authorList>
    </citation>
    <scope>NUCLEOTIDE SEQUENCE [LARGE SCALE GENOMIC DNA]</scope>
</reference>
<reference key="6">
    <citation type="journal article" date="2004" name="Genome Res.">
        <title>The status, quality, and expansion of the NIH full-length cDNA project: the Mammalian Gene Collection (MGC).</title>
        <authorList>
            <consortium name="The MGC Project Team"/>
        </authorList>
    </citation>
    <scope>NUCLEOTIDE SEQUENCE [LARGE SCALE MRNA] (ISOFORMS 3; 5; 7 AND 8)</scope>
    <source>
        <tissue>Brain</tissue>
        <tissue>Hippocampus</tissue>
    </source>
</reference>
<reference key="7">
    <citation type="journal article" date="1999" name="Oncogene">
        <title>EB-1, a tyrosine kinase signal transduction gene, is transcriptionally activated in the t(1;19) subset of pre-B ALL, which express oncoprotein E2a-Pbx1.</title>
        <authorList>
            <person name="Fu X."/>
            <person name="McGrath S."/>
            <person name="Pasillas M."/>
            <person name="Nakazawa S."/>
            <person name="Kamps M.P."/>
        </authorList>
    </citation>
    <scope>NUCLEOTIDE SEQUENCE [MRNA] OF 294-1248 (ISOFORM 1)</scope>
    <scope>INDUCTION</scope>
    <scope>TISSUE SPECIFICITY</scope>
</reference>
<reference key="8">
    <citation type="journal article" date="2004" name="J. Biol. Chem.">
        <title>Amyloid-beta protein precursor (AbetaPP) intracellular domain-associated protein-1 proteins bind to AbetaPP and modulate its processing in an isoform-specific manner.</title>
        <authorList>
            <person name="Ghersi E."/>
            <person name="Noviello C."/>
            <person name="D'Adamio L."/>
        </authorList>
    </citation>
    <scope>NUCLEOTIDE SEQUENCE [MRNA] OF 425-1192 (ISOFORM 1)</scope>
    <scope>FUNCTION</scope>
    <scope>INTERACTION WITH APP</scope>
    <scope>SUBCELLULAR LOCATION</scope>
    <scope>TISSUE SPECIFICITY</scope>
</reference>
<reference key="9">
    <citation type="journal article" date="2006" name="Haematologica">
        <title>The effects of siRNA-mediated inhibition of E2A-PBX1 on EB-1 and Wnt16b expression in the 697 pre-B leukemia cell line.</title>
        <authorList>
            <person name="Casagrande G."/>
            <person name="te Kronnie G."/>
            <person name="Basso G."/>
        </authorList>
    </citation>
    <scope>INDUCTION</scope>
</reference>
<reference key="10">
    <citation type="journal article" date="2007" name="Mol. Cell. Biol.">
        <title>Identification of phosphotyrosine binding domain-containing proteins as novel downstream targets of the EphA8 signaling function.</title>
        <authorList>
            <person name="Shin J."/>
            <person name="Gu C."/>
            <person name="Park E."/>
            <person name="Park S."/>
        </authorList>
    </citation>
    <scope>INTERACTION WITH EPHA8</scope>
</reference>
<reference key="11">
    <citation type="journal article" date="2009" name="J. Mol. Biol.">
        <title>A nuclear localization signal at the SAM-SAM domain interface of AIDA-1 suggests a requirement for domain uncoupling prior to nuclear import.</title>
        <authorList>
            <person name="Kurabi A."/>
            <person name="Brener S."/>
            <person name="Mobli M."/>
            <person name="Kwan J.J."/>
            <person name="Donaldson L.W."/>
        </authorList>
    </citation>
    <scope>STRUCTURE BY NMR OF 813-947</scope>
    <scope>SUBCELLULAR LOCATION</scope>
    <scope>NUCLEAR LOCALIZATION SIGNAL</scope>
</reference>
<comment type="function">
    <text>Isoform 2 may participate in the regulation of nucleoplasmic coilin protein interactions in neuronal and transformed cells.</text>
</comment>
<comment type="function">
    <text evidence="1 9 10">Isoform 3 can regulate global protein synthesis by altering nucleolar numbers.</text>
</comment>
<comment type="function">
    <text>Isoform 4 may play a role as a modulator of APP processing. Overexpression can down-regulate APP processing.</text>
</comment>
<comment type="subunit">
    <text evidence="1 8 9 10 12">Isoform 3 interacts with DLG4 (By similarity). Interacts with EPHA8. Isoform 2 interacts with COIL. Isoform 4 interacts with APP and EPHA8. Isoform 6 interacts with EPHA8.</text>
</comment>
<comment type="interaction">
    <interactant intactId="EBI-20771343">
        <id>Q7Z6G8-1</id>
    </interactant>
    <interactant intactId="EBI-945751">
        <id>P38432</id>
        <label>COIL</label>
    </interactant>
    <organismsDiffer>false</organismsDiffer>
    <experiments>3</experiments>
</comment>
<comment type="interaction">
    <interactant intactId="EBI-20771303">
        <id>Q7Z6G8-2</id>
    </interactant>
    <interactant intactId="EBI-945751">
        <id>P38432</id>
        <label>COIL</label>
    </interactant>
    <organismsDiffer>false</organismsDiffer>
    <experiments>3</experiments>
</comment>
<comment type="interaction">
    <interactant intactId="EBI-17714371">
        <id>Q7Z6G8-3</id>
    </interactant>
    <interactant intactId="EBI-12270182">
        <id>Q9NQ75-2</id>
        <label>CASS4</label>
    </interactant>
    <organismsDiffer>false</organismsDiffer>
    <experiments>3</experiments>
</comment>
<comment type="interaction">
    <interactant intactId="EBI-17714371">
        <id>Q7Z6G8-3</id>
    </interactant>
    <interactant intactId="EBI-7116203">
        <id>O75031</id>
        <label>HSF2BP</label>
    </interactant>
    <organismsDiffer>false</organismsDiffer>
    <experiments>3</experiments>
</comment>
<comment type="interaction">
    <interactant intactId="EBI-17714371">
        <id>Q7Z6G8-3</id>
    </interactant>
    <interactant intactId="EBI-713635">
        <id>O43639</id>
        <label>NCK2</label>
    </interactant>
    <organismsDiffer>false</organismsDiffer>
    <experiments>3</experiments>
</comment>
<comment type="interaction">
    <interactant intactId="EBI-17714371">
        <id>Q7Z6G8-3</id>
    </interactant>
    <interactant intactId="EBI-446668">
        <id>P61586</id>
        <label>RHOA</label>
    </interactant>
    <organismsDiffer>false</organismsDiffer>
    <experiments>3</experiments>
</comment>
<comment type="interaction">
    <interactant intactId="EBI-17714371">
        <id>Q7Z6G8-3</id>
    </interactant>
    <interactant intactId="EBI-366017">
        <id>Q13671</id>
        <label>RIN1</label>
    </interactant>
    <organismsDiffer>false</organismsDiffer>
    <experiments>3</experiments>
</comment>
<comment type="subcellular location">
    <subcellularLocation>
        <location evidence="8 9 10 13">Cytoplasm</location>
    </subcellularLocation>
</comment>
<comment type="subcellular location">
    <molecule>Isoform 2</molecule>
    <subcellularLocation>
        <location>Nucleus</location>
    </subcellularLocation>
</comment>
<comment type="subcellular location">
    <molecule>Isoform 3</molecule>
    <subcellularLocation>
        <location>Postsynaptic density</location>
    </subcellularLocation>
    <subcellularLocation>
        <location>Cell projection</location>
        <location>Dendritic spine</location>
    </subcellularLocation>
    <subcellularLocation>
        <location>Nucleus</location>
    </subcellularLocation>
    <subcellularLocation>
        <location>Nucleus</location>
        <location>Cajal body</location>
    </subcellularLocation>
    <text evidence="1">The synaptic localization requires DLG4 interaction. Translocation to the nucleus in response to stimulation of NMDA receptors (NMDARs) in a calcium-independent manner (By similarity).</text>
</comment>
<comment type="subcellular location">
    <molecule>Isoform 4</molecule>
    <subcellularLocation>
        <location>Nucleus</location>
    </subcellularLocation>
    <text>The interaction with APP causes its partial exclusion from the nucleus, when APP is overexpressed.</text>
</comment>
<comment type="subcellular location">
    <molecule>Isoform 6</molecule>
    <subcellularLocation>
        <location>Nucleus</location>
    </subcellularLocation>
</comment>
<comment type="alternative products">
    <event type="alternative splicing"/>
    <isoform>
        <id>Q7Z6G8-1</id>
        <name>1</name>
        <name>AIDA-1b</name>
        <sequence type="displayed"/>
    </isoform>
    <isoform>
        <id>Q7Z6G8-2</id>
        <name>2</name>
        <name>AIDA-1c</name>
        <sequence type="described" ref="VSP_032702 VSP_032704 VSP_032707 VSP_032710"/>
    </isoform>
    <isoform>
        <id>Q7Z6G8-3</id>
        <name>3</name>
        <sequence type="described" ref="VSP_032702 VSP_032704 VSP_032709 VSP_032710"/>
    </isoform>
    <isoform>
        <id>Q7Z6G8-4</id>
        <name>4</name>
        <name>AIDA-1a</name>
        <sequence type="described" ref="VSP_032702 VSP_032704 VSP_032711"/>
    </isoform>
    <isoform>
        <id>Q7Z6G8-5</id>
        <name>5</name>
        <sequence type="described" ref="VSP_032702 VSP_032704 VSP_032708 VSP_032710"/>
    </isoform>
    <isoform>
        <id>Q7Z6G8-6</id>
        <name>6</name>
        <name>AIDA-1bDeltaAnk</name>
        <sequence type="described" ref="VSP_032703 VSP_032705 VSP_032707"/>
    </isoform>
    <isoform>
        <id>Q7Z6G8-7</id>
        <name>7</name>
        <sequence type="described" ref="VSP_032702 VSP_032704 VSP_032707"/>
    </isoform>
    <isoform>
        <id>Q7Z6G8-8</id>
        <name>8</name>
        <sequence type="described" ref="VSP_032701 VSP_032706 VSP_032712"/>
    </isoform>
    <isoform>
        <id>Q7Z6G8-9</id>
        <name>9</name>
        <sequence type="described" ref="VSP_046414"/>
    </isoform>
    <isoform>
        <id>Q7Z6G8-10</id>
        <name>10</name>
        <sequence type="described" ref="VSP_046415 VSP_032707 VSP_032712"/>
    </isoform>
</comment>
<comment type="tissue specificity">
    <text evidence="7 9">Highly expressed in marrow from patients with pre-B ALL associated with the t(1;19) translocation. Strongly expressed in brain and testis. Expressed in fetal brain. Isoform 4 is highly expressed in brain (at protein level). Isoform 6 is expressed in brain and several cancer cell lines.</text>
</comment>
<comment type="induction">
    <text evidence="7 11">Transcriptionally up-regulated in t(1:19) pre-B cell acute lymphocytic leukemia by the chimeric TCF3-PBX1. Not expressed in pre-B cell that lack this translocation.</text>
</comment>
<comment type="PTM">
    <text evidence="1">Isoform 3 nuclear translocation requires an NMDAR-dependent proteolytic cleavage.</text>
</comment>
<comment type="sequence caution" evidence="19">
    <conflict type="erroneous initiation">
        <sequence resource="EMBL-CDS" id="AAP38184"/>
    </conflict>
    <text>Truncated N-terminus.</text>
</comment>
<name>ANS1B_HUMAN</name>
<keyword id="KW-0002">3D-structure</keyword>
<keyword id="KW-0025">Alternative splicing</keyword>
<keyword id="KW-0040">ANK repeat</keyword>
<keyword id="KW-0966">Cell projection</keyword>
<keyword id="KW-0963">Cytoplasm</keyword>
<keyword id="KW-0539">Nucleus</keyword>
<keyword id="KW-0597">Phosphoprotein</keyword>
<keyword id="KW-1267">Proteomics identification</keyword>
<keyword id="KW-1185">Reference proteome</keyword>
<keyword id="KW-0677">Repeat</keyword>
<keyword id="KW-0770">Synapse</keyword>
<dbReference type="EMBL" id="AY281131">
    <property type="protein sequence ID" value="AAP37612.1"/>
    <property type="molecule type" value="mRNA"/>
</dbReference>
<dbReference type="EMBL" id="AY281132">
    <property type="protein sequence ID" value="AAP37613.1"/>
    <property type="molecule type" value="mRNA"/>
</dbReference>
<dbReference type="EMBL" id="AY283057">
    <property type="protein sequence ID" value="AAP38184.2"/>
    <property type="status" value="ALT_INIT"/>
    <property type="molecule type" value="mRNA"/>
</dbReference>
<dbReference type="EMBL" id="AY753193">
    <property type="protein sequence ID" value="AAV28691.1"/>
    <property type="molecule type" value="mRNA"/>
</dbReference>
<dbReference type="EMBL" id="AF164792">
    <property type="protein sequence ID" value="AAF80756.1"/>
    <property type="molecule type" value="mRNA"/>
</dbReference>
<dbReference type="EMBL" id="AK289768">
    <property type="protein sequence ID" value="BAF82457.1"/>
    <property type="molecule type" value="mRNA"/>
</dbReference>
<dbReference type="EMBL" id="AK294191">
    <property type="protein sequence ID" value="BAG57507.1"/>
    <property type="molecule type" value="mRNA"/>
</dbReference>
<dbReference type="EMBL" id="AK294994">
    <property type="protein sequence ID" value="BAG58059.1"/>
    <property type="molecule type" value="mRNA"/>
</dbReference>
<dbReference type="EMBL" id="AC008126">
    <property type="status" value="NOT_ANNOTATED_CDS"/>
    <property type="molecule type" value="Genomic_DNA"/>
</dbReference>
<dbReference type="EMBL" id="AC011248">
    <property type="status" value="NOT_ANNOTATED_CDS"/>
    <property type="molecule type" value="Genomic_DNA"/>
</dbReference>
<dbReference type="EMBL" id="AC021653">
    <property type="status" value="NOT_ANNOTATED_CDS"/>
    <property type="molecule type" value="Genomic_DNA"/>
</dbReference>
<dbReference type="EMBL" id="AC048330">
    <property type="status" value="NOT_ANNOTATED_CDS"/>
    <property type="molecule type" value="Genomic_DNA"/>
</dbReference>
<dbReference type="EMBL" id="AC069437">
    <property type="status" value="NOT_ANNOTATED_CDS"/>
    <property type="molecule type" value="Genomic_DNA"/>
</dbReference>
<dbReference type="EMBL" id="AC078916">
    <property type="status" value="NOT_ANNOTATED_CDS"/>
    <property type="molecule type" value="Genomic_DNA"/>
</dbReference>
<dbReference type="EMBL" id="AC079954">
    <property type="status" value="NOT_ANNOTATED_CDS"/>
    <property type="molecule type" value="Genomic_DNA"/>
</dbReference>
<dbReference type="EMBL" id="AC084374">
    <property type="status" value="NOT_ANNOTATED_CDS"/>
    <property type="molecule type" value="Genomic_DNA"/>
</dbReference>
<dbReference type="EMBL" id="AC117377">
    <property type="status" value="NOT_ANNOTATED_CDS"/>
    <property type="molecule type" value="Genomic_DNA"/>
</dbReference>
<dbReference type="EMBL" id="AC126616">
    <property type="status" value="NOT_ANNOTATED_CDS"/>
    <property type="molecule type" value="Genomic_DNA"/>
</dbReference>
<dbReference type="EMBL" id="AC141554">
    <property type="status" value="NOT_ANNOTATED_CDS"/>
    <property type="molecule type" value="Genomic_DNA"/>
</dbReference>
<dbReference type="EMBL" id="AC141555">
    <property type="status" value="NOT_ANNOTATED_CDS"/>
    <property type="molecule type" value="Genomic_DNA"/>
</dbReference>
<dbReference type="EMBL" id="AC141556">
    <property type="status" value="NOT_ANNOTATED_CDS"/>
    <property type="molecule type" value="Genomic_DNA"/>
</dbReference>
<dbReference type="EMBL" id="BC026313">
    <property type="protein sequence ID" value="AAH26313.2"/>
    <property type="molecule type" value="mRNA"/>
</dbReference>
<dbReference type="EMBL" id="BC068451">
    <property type="protein sequence ID" value="AAH68451.1"/>
    <property type="molecule type" value="mRNA"/>
</dbReference>
<dbReference type="EMBL" id="BC142669">
    <property type="protein sequence ID" value="AAI42670.1"/>
    <property type="molecule type" value="mRNA"/>
</dbReference>
<dbReference type="EMBL" id="BC150204">
    <property type="protein sequence ID" value="AAI50205.1"/>
    <property type="molecule type" value="mRNA"/>
</dbReference>
<dbReference type="EMBL" id="AF145204">
    <property type="protein sequence ID" value="AAD33951.1"/>
    <property type="molecule type" value="mRNA"/>
</dbReference>
<dbReference type="EMBL" id="AY620824">
    <property type="protein sequence ID" value="AAT39519.1"/>
    <property type="molecule type" value="mRNA"/>
</dbReference>
<dbReference type="CCDS" id="CCDS55864.1">
    <molecule id="Q7Z6G8-9"/>
</dbReference>
<dbReference type="CCDS" id="CCDS55865.1">
    <molecule id="Q7Z6G8-8"/>
</dbReference>
<dbReference type="CCDS" id="CCDS55866.1">
    <molecule id="Q7Z6G8-7"/>
</dbReference>
<dbReference type="CCDS" id="CCDS55867.1">
    <molecule id="Q7Z6G8-2"/>
</dbReference>
<dbReference type="CCDS" id="CCDS55868.1">
    <molecule id="Q7Z6G8-5"/>
</dbReference>
<dbReference type="CCDS" id="CCDS55869.1">
    <molecule id="Q7Z6G8-4"/>
</dbReference>
<dbReference type="CCDS" id="CCDS55870.1">
    <molecule id="Q7Z6G8-3"/>
</dbReference>
<dbReference type="CCDS" id="CCDS55871.1">
    <molecule id="Q7Z6G8-10"/>
</dbReference>
<dbReference type="CCDS" id="CCDS55872.1">
    <molecule id="Q7Z6G8-1"/>
</dbReference>
<dbReference type="RefSeq" id="NP_001190994.1">
    <property type="nucleotide sequence ID" value="NM_001204065.1"/>
</dbReference>
<dbReference type="RefSeq" id="NP_001190995.1">
    <molecule id="Q7Z6G8-8"/>
    <property type="nucleotide sequence ID" value="NM_001204066.2"/>
</dbReference>
<dbReference type="RefSeq" id="NP_001190996.1">
    <molecule id="Q7Z6G8-10"/>
    <property type="nucleotide sequence ID" value="NM_001204067.2"/>
</dbReference>
<dbReference type="RefSeq" id="NP_001190997.1">
    <molecule id="Q7Z6G8-4"/>
    <property type="nucleotide sequence ID" value="NM_001204068.2"/>
</dbReference>
<dbReference type="RefSeq" id="NP_001190998.1">
    <molecule id="Q7Z6G8-5"/>
    <property type="nucleotide sequence ID" value="NM_001204069.2"/>
</dbReference>
<dbReference type="RefSeq" id="NP_001190999.1">
    <molecule id="Q7Z6G8-2"/>
    <property type="nucleotide sequence ID" value="NM_001204070.2"/>
</dbReference>
<dbReference type="RefSeq" id="NP_001191008.1">
    <property type="nucleotide sequence ID" value="NM_001204079.1"/>
</dbReference>
<dbReference type="RefSeq" id="NP_001191009.1">
    <property type="nucleotide sequence ID" value="NM_001204080.1"/>
</dbReference>
<dbReference type="RefSeq" id="NP_001191010.1">
    <molecule id="Q7Z6G8-9"/>
    <property type="nucleotide sequence ID" value="NM_001204081.2"/>
</dbReference>
<dbReference type="RefSeq" id="NP_064525.1">
    <molecule id="Q7Z6G8-7"/>
    <property type="nucleotide sequence ID" value="NM_020140.4"/>
</dbReference>
<dbReference type="RefSeq" id="NP_690001.3">
    <molecule id="Q7Z6G8-1"/>
    <property type="nucleotide sequence ID" value="NM_152788.4"/>
</dbReference>
<dbReference type="RefSeq" id="NP_858056.2">
    <molecule id="Q7Z6G8-3"/>
    <property type="nucleotide sequence ID" value="NM_181670.3"/>
</dbReference>
<dbReference type="PDB" id="2EAM">
    <property type="method" value="NMR"/>
    <property type="chains" value="A=808-874"/>
</dbReference>
<dbReference type="PDB" id="2KE7">
    <property type="method" value="NMR"/>
    <property type="chains" value="A=808-893"/>
</dbReference>
<dbReference type="PDB" id="2KIV">
    <property type="method" value="NMR"/>
    <property type="chains" value="A=812-946"/>
</dbReference>
<dbReference type="PDB" id="2M38">
    <property type="method" value="NMR"/>
    <property type="chains" value="A=1042-1194"/>
</dbReference>
<dbReference type="PDBsum" id="2EAM"/>
<dbReference type="PDBsum" id="2KE7"/>
<dbReference type="PDBsum" id="2KIV"/>
<dbReference type="PDBsum" id="2M38"/>
<dbReference type="SMR" id="Q7Z6G8"/>
<dbReference type="BioGRID" id="121229">
    <property type="interactions" value="25"/>
</dbReference>
<dbReference type="DIP" id="DIP-41406N"/>
<dbReference type="FunCoup" id="Q7Z6G8">
    <property type="interactions" value="1475"/>
</dbReference>
<dbReference type="IntAct" id="Q7Z6G8">
    <property type="interactions" value="20"/>
</dbReference>
<dbReference type="MINT" id="Q7Z6G8"/>
<dbReference type="STRING" id="9606.ENSP00000449629"/>
<dbReference type="GlyGen" id="Q7Z6G8">
    <property type="glycosylation" value="2 sites, 1 O-linked glycan (1 site)"/>
</dbReference>
<dbReference type="iPTMnet" id="Q7Z6G8"/>
<dbReference type="PhosphoSitePlus" id="Q7Z6G8"/>
<dbReference type="SwissPalm" id="Q7Z6G8"/>
<dbReference type="BioMuta" id="ANKS1B"/>
<dbReference type="DMDM" id="332278155"/>
<dbReference type="jPOST" id="Q7Z6G8"/>
<dbReference type="MassIVE" id="Q7Z6G8"/>
<dbReference type="PaxDb" id="9606-ENSP00000449629"/>
<dbReference type="PeptideAtlas" id="Q7Z6G8"/>
<dbReference type="ProteomicsDB" id="28297"/>
<dbReference type="ProteomicsDB" id="29375"/>
<dbReference type="ProteomicsDB" id="31007"/>
<dbReference type="ProteomicsDB" id="69401">
    <molecule id="Q7Z6G8-1"/>
</dbReference>
<dbReference type="ProteomicsDB" id="69402">
    <molecule id="Q7Z6G8-2"/>
</dbReference>
<dbReference type="ProteomicsDB" id="69403">
    <molecule id="Q7Z6G8-3"/>
</dbReference>
<dbReference type="ProteomicsDB" id="69404">
    <molecule id="Q7Z6G8-4"/>
</dbReference>
<dbReference type="ProteomicsDB" id="69405">
    <molecule id="Q7Z6G8-5"/>
</dbReference>
<dbReference type="ProteomicsDB" id="69406">
    <molecule id="Q7Z6G8-6"/>
</dbReference>
<dbReference type="ProteomicsDB" id="69407">
    <molecule id="Q7Z6G8-7"/>
</dbReference>
<dbReference type="ProteomicsDB" id="69408">
    <molecule id="Q7Z6G8-8"/>
</dbReference>
<dbReference type="Antibodypedia" id="57828">
    <property type="antibodies" value="148 antibodies from 22 providers"/>
</dbReference>
<dbReference type="DNASU" id="56899"/>
<dbReference type="Ensembl" id="ENST00000341752.11">
    <molecule id="Q7Z6G8-9"/>
    <property type="protein sequence ID" value="ENSP00000345510.6"/>
    <property type="gene ID" value="ENSG00000185046.21"/>
</dbReference>
<dbReference type="Ensembl" id="ENST00000546568.5">
    <molecule id="Q7Z6G8-2"/>
    <property type="protein sequence ID" value="ENSP00000448205.1"/>
    <property type="gene ID" value="ENSG00000185046.21"/>
</dbReference>
<dbReference type="Ensembl" id="ENST00000546960.5">
    <molecule id="Q7Z6G8-4"/>
    <property type="protein sequence ID" value="ENSP00000447839.1"/>
    <property type="gene ID" value="ENSG00000185046.21"/>
</dbReference>
<dbReference type="Ensembl" id="ENST00000547010.5">
    <molecule id="Q7Z6G8-6"/>
    <property type="protein sequence ID" value="ENSP00000448512.1"/>
    <property type="gene ID" value="ENSG00000185046.21"/>
</dbReference>
<dbReference type="Ensembl" id="ENST00000547446.5">
    <molecule id="Q7Z6G8-10"/>
    <property type="protein sequence ID" value="ENSP00000450015.1"/>
    <property type="gene ID" value="ENSG00000185046.21"/>
</dbReference>
<dbReference type="Ensembl" id="ENST00000547776.6">
    <molecule id="Q7Z6G8-1"/>
    <property type="protein sequence ID" value="ENSP00000449629.2"/>
    <property type="gene ID" value="ENSG00000185046.21"/>
</dbReference>
<dbReference type="Ensembl" id="ENST00000549025.6">
    <molecule id="Q7Z6G8-8"/>
    <property type="protein sequence ID" value="ENSP00000447312.2"/>
    <property type="gene ID" value="ENSG00000185046.21"/>
</dbReference>
<dbReference type="Ensembl" id="ENST00000549493.6">
    <molecule id="Q7Z6G8-3"/>
    <property type="protein sequence ID" value="ENSP00000448203.2"/>
    <property type="gene ID" value="ENSG00000185046.21"/>
</dbReference>
<dbReference type="Ensembl" id="ENST00000549558.6">
    <molecule id="Q7Z6G8-7"/>
    <property type="protein sequence ID" value="ENSP00000448993.2"/>
    <property type="gene ID" value="ENSG00000185046.21"/>
</dbReference>
<dbReference type="Ensembl" id="ENST00000550693.6">
    <molecule id="Q7Z6G8-5"/>
    <property type="protein sequence ID" value="ENSP00000447999.2"/>
    <property type="gene ID" value="ENSG00000185046.21"/>
</dbReference>
<dbReference type="GeneID" id="56899"/>
<dbReference type="KEGG" id="hsa:56899"/>
<dbReference type="UCSC" id="uc001tgd.3">
    <molecule id="Q7Z6G8-1"/>
    <property type="organism name" value="human"/>
</dbReference>
<dbReference type="AGR" id="HGNC:24600"/>
<dbReference type="CTD" id="56899"/>
<dbReference type="DisGeNET" id="56899"/>
<dbReference type="GeneCards" id="ANKS1B"/>
<dbReference type="HGNC" id="HGNC:24600">
    <property type="gene designation" value="ANKS1B"/>
</dbReference>
<dbReference type="HPA" id="ENSG00000185046">
    <property type="expression patterns" value="Tissue enriched (brain)"/>
</dbReference>
<dbReference type="MalaCards" id="ANKS1B"/>
<dbReference type="MIM" id="607815">
    <property type="type" value="gene"/>
</dbReference>
<dbReference type="neXtProt" id="NX_Q7Z6G8"/>
<dbReference type="OpenTargets" id="ENSG00000185046"/>
<dbReference type="PharmGKB" id="PA128394692"/>
<dbReference type="VEuPathDB" id="HostDB:ENSG00000185046"/>
<dbReference type="eggNOG" id="KOG0507">
    <property type="taxonomic scope" value="Eukaryota"/>
</dbReference>
<dbReference type="GeneTree" id="ENSGT00940000154572"/>
<dbReference type="HOGENOM" id="CLU_010379_0_0_1"/>
<dbReference type="InParanoid" id="Q7Z6G8"/>
<dbReference type="OrthoDB" id="10039052at2759"/>
<dbReference type="PAN-GO" id="Q7Z6G8">
    <property type="GO annotations" value="3 GO annotations based on evolutionary models"/>
</dbReference>
<dbReference type="TreeFam" id="TF320582"/>
<dbReference type="PathwayCommons" id="Q7Z6G8"/>
<dbReference type="SignaLink" id="Q7Z6G8"/>
<dbReference type="SIGNOR" id="Q7Z6G8"/>
<dbReference type="BioGRID-ORCS" id="56899">
    <property type="hits" value="7 hits in 1138 CRISPR screens"/>
</dbReference>
<dbReference type="CD-CODE" id="6F24707C">
    <property type="entry name" value="Cajal body"/>
</dbReference>
<dbReference type="CD-CODE" id="FB4E32DD">
    <property type="entry name" value="Presynaptic clusters and postsynaptic densities"/>
</dbReference>
<dbReference type="ChiTaRS" id="ANKS1B">
    <property type="organism name" value="human"/>
</dbReference>
<dbReference type="EvolutionaryTrace" id="Q7Z6G8"/>
<dbReference type="GeneWiki" id="ANKS1B"/>
<dbReference type="GenomeRNAi" id="56899"/>
<dbReference type="Pharos" id="Q7Z6G8">
    <property type="development level" value="Tbio"/>
</dbReference>
<dbReference type="PRO" id="PR:Q7Z6G8"/>
<dbReference type="Proteomes" id="UP000005640">
    <property type="component" value="Chromosome 12"/>
</dbReference>
<dbReference type="RNAct" id="Q7Z6G8">
    <property type="molecule type" value="protein"/>
</dbReference>
<dbReference type="Bgee" id="ENSG00000185046">
    <property type="expression patterns" value="Expressed in Brodmann (1909) area 23 and 145 other cell types or tissues"/>
</dbReference>
<dbReference type="ExpressionAtlas" id="Q7Z6G8">
    <property type="expression patterns" value="baseline and differential"/>
</dbReference>
<dbReference type="GO" id="GO:0015030">
    <property type="term" value="C:Cajal body"/>
    <property type="evidence" value="ECO:0007669"/>
    <property type="project" value="UniProtKB-SubCell"/>
</dbReference>
<dbReference type="GO" id="GO:0005813">
    <property type="term" value="C:centrosome"/>
    <property type="evidence" value="ECO:0000314"/>
    <property type="project" value="HPA"/>
</dbReference>
<dbReference type="GO" id="GO:0005829">
    <property type="term" value="C:cytosol"/>
    <property type="evidence" value="ECO:0000318"/>
    <property type="project" value="GO_Central"/>
</dbReference>
<dbReference type="GO" id="GO:0043197">
    <property type="term" value="C:dendritic spine"/>
    <property type="evidence" value="ECO:0007669"/>
    <property type="project" value="UniProtKB-SubCell"/>
</dbReference>
<dbReference type="GO" id="GO:0005654">
    <property type="term" value="C:nucleoplasm"/>
    <property type="evidence" value="ECO:0000314"/>
    <property type="project" value="HPA"/>
</dbReference>
<dbReference type="GO" id="GO:0005886">
    <property type="term" value="C:plasma membrane"/>
    <property type="evidence" value="ECO:0000314"/>
    <property type="project" value="HPA"/>
</dbReference>
<dbReference type="GO" id="GO:0014069">
    <property type="term" value="C:postsynaptic density"/>
    <property type="evidence" value="ECO:0007669"/>
    <property type="project" value="UniProtKB-SubCell"/>
</dbReference>
<dbReference type="GO" id="GO:0046875">
    <property type="term" value="F:ephrin receptor binding"/>
    <property type="evidence" value="ECO:0000353"/>
    <property type="project" value="UniProtKB"/>
</dbReference>
<dbReference type="GO" id="GO:0048013">
    <property type="term" value="P:ephrin receptor signaling pathway"/>
    <property type="evidence" value="ECO:0000318"/>
    <property type="project" value="GO_Central"/>
</dbReference>
<dbReference type="CDD" id="cd01274">
    <property type="entry name" value="PTB_Anks"/>
    <property type="match status" value="1"/>
</dbReference>
<dbReference type="CDD" id="cd09499">
    <property type="entry name" value="SAM_AIDA1AB-like_repeat1"/>
    <property type="match status" value="1"/>
</dbReference>
<dbReference type="CDD" id="cd09500">
    <property type="entry name" value="SAM_AIDA1AB-like_repeat2"/>
    <property type="match status" value="1"/>
</dbReference>
<dbReference type="FunFam" id="1.10.150.50:FF:000016">
    <property type="entry name" value="Ankyrin repeat and sterile alpha motif domain-containing protein 1B"/>
    <property type="match status" value="1"/>
</dbReference>
<dbReference type="FunFam" id="2.30.29.30:FF:000045">
    <property type="entry name" value="Ankyrin repeat and sterile alpha motif domain-containing protein 1B"/>
    <property type="match status" value="1"/>
</dbReference>
<dbReference type="FunFam" id="1.10.150.50:FF:000015">
    <property type="entry name" value="ankyrin repeat and sterile alpha motif domain-containing protein 1B"/>
    <property type="match status" value="1"/>
</dbReference>
<dbReference type="FunFam" id="1.25.40.20:FF:000136">
    <property type="entry name" value="ankyrin repeat and sterile alpha motif domain-containing protein 1B isoform X1"/>
    <property type="match status" value="1"/>
</dbReference>
<dbReference type="FunFam" id="1.25.40.20:FF:000099">
    <property type="entry name" value="ankyrin repeat and sterile alpha motif domain-containing protein 1B isoform X5"/>
    <property type="match status" value="1"/>
</dbReference>
<dbReference type="Gene3D" id="1.25.40.20">
    <property type="entry name" value="Ankyrin repeat-containing domain"/>
    <property type="match status" value="2"/>
</dbReference>
<dbReference type="Gene3D" id="2.30.29.30">
    <property type="entry name" value="Pleckstrin-homology domain (PH domain)/Phosphotyrosine-binding domain (PTB)"/>
    <property type="match status" value="1"/>
</dbReference>
<dbReference type="Gene3D" id="1.10.150.50">
    <property type="entry name" value="Transcription Factor, Ets-1"/>
    <property type="match status" value="2"/>
</dbReference>
<dbReference type="InterPro" id="IPR033635">
    <property type="entry name" value="ANKS1/Caskin"/>
</dbReference>
<dbReference type="InterPro" id="IPR002110">
    <property type="entry name" value="Ankyrin_rpt"/>
</dbReference>
<dbReference type="InterPro" id="IPR036770">
    <property type="entry name" value="Ankyrin_rpt-contain_sf"/>
</dbReference>
<dbReference type="InterPro" id="IPR011993">
    <property type="entry name" value="PH-like_dom_sf"/>
</dbReference>
<dbReference type="InterPro" id="IPR006020">
    <property type="entry name" value="PTB/PI_dom"/>
</dbReference>
<dbReference type="InterPro" id="IPR001660">
    <property type="entry name" value="SAM"/>
</dbReference>
<dbReference type="InterPro" id="IPR013761">
    <property type="entry name" value="SAM/pointed_sf"/>
</dbReference>
<dbReference type="InterPro" id="IPR041880">
    <property type="entry name" value="SAM_ANKS1_repeat1"/>
</dbReference>
<dbReference type="InterPro" id="IPR041882">
    <property type="entry name" value="SAM_ANKS1_repeat2"/>
</dbReference>
<dbReference type="PANTHER" id="PTHR24174">
    <property type="entry name" value="ANKYRIN REPEAT AND STERILE ALPHA MOTIF DOMAIN-CONTAINING PROTEIN 1"/>
    <property type="match status" value="1"/>
</dbReference>
<dbReference type="PANTHER" id="PTHR24174:SF3">
    <property type="entry name" value="ANKYRIN REPEAT AND STERILE ALPHA MOTIF DOMAIN-CONTAINING PROTEIN 1B"/>
    <property type="match status" value="1"/>
</dbReference>
<dbReference type="Pfam" id="PF12796">
    <property type="entry name" value="Ank_2"/>
    <property type="match status" value="3"/>
</dbReference>
<dbReference type="Pfam" id="PF00640">
    <property type="entry name" value="PID"/>
    <property type="match status" value="1"/>
</dbReference>
<dbReference type="Pfam" id="PF00536">
    <property type="entry name" value="SAM_1"/>
    <property type="match status" value="2"/>
</dbReference>
<dbReference type="PRINTS" id="PR01415">
    <property type="entry name" value="ANKYRIN"/>
</dbReference>
<dbReference type="SMART" id="SM00248">
    <property type="entry name" value="ANK"/>
    <property type="match status" value="6"/>
</dbReference>
<dbReference type="SMART" id="SM00462">
    <property type="entry name" value="PTB"/>
    <property type="match status" value="1"/>
</dbReference>
<dbReference type="SMART" id="SM00454">
    <property type="entry name" value="SAM"/>
    <property type="match status" value="2"/>
</dbReference>
<dbReference type="SUPFAM" id="SSF48403">
    <property type="entry name" value="Ankyrin repeat"/>
    <property type="match status" value="1"/>
</dbReference>
<dbReference type="SUPFAM" id="SSF50729">
    <property type="entry name" value="PH domain-like"/>
    <property type="match status" value="1"/>
</dbReference>
<dbReference type="SUPFAM" id="SSF47769">
    <property type="entry name" value="SAM/Pointed domain"/>
    <property type="match status" value="2"/>
</dbReference>
<dbReference type="PROSITE" id="PS50297">
    <property type="entry name" value="ANK_REP_REGION"/>
    <property type="match status" value="1"/>
</dbReference>
<dbReference type="PROSITE" id="PS50088">
    <property type="entry name" value="ANK_REPEAT"/>
    <property type="match status" value="5"/>
</dbReference>
<dbReference type="PROSITE" id="PS01179">
    <property type="entry name" value="PID"/>
    <property type="match status" value="1"/>
</dbReference>
<dbReference type="PROSITE" id="PS50105">
    <property type="entry name" value="SAM_DOMAIN"/>
    <property type="match status" value="2"/>
</dbReference>
<organism>
    <name type="scientific">Homo sapiens</name>
    <name type="common">Human</name>
    <dbReference type="NCBI Taxonomy" id="9606"/>
    <lineage>
        <taxon>Eukaryota</taxon>
        <taxon>Metazoa</taxon>
        <taxon>Chordata</taxon>
        <taxon>Craniata</taxon>
        <taxon>Vertebrata</taxon>
        <taxon>Euteleostomi</taxon>
        <taxon>Mammalia</taxon>
        <taxon>Eutheria</taxon>
        <taxon>Euarchontoglires</taxon>
        <taxon>Primates</taxon>
        <taxon>Haplorrhini</taxon>
        <taxon>Catarrhini</taxon>
        <taxon>Hominidae</taxon>
        <taxon>Homo</taxon>
    </lineage>
</organism>
<feature type="chain" id="PRO_0000327259" description="Ankyrin repeat and sterile alpha motif domain-containing protein 1B">
    <location>
        <begin position="1"/>
        <end position="1248"/>
    </location>
</feature>
<feature type="repeat" description="ANK 1">
    <location>
        <begin position="2"/>
        <end position="31"/>
    </location>
</feature>
<feature type="repeat" description="ANK 2">
    <location>
        <begin position="58"/>
        <end position="87"/>
    </location>
</feature>
<feature type="repeat" description="ANK 3">
    <location>
        <begin position="91"/>
        <end position="120"/>
    </location>
</feature>
<feature type="repeat" description="ANK 4">
    <location>
        <begin position="127"/>
        <end position="156"/>
    </location>
</feature>
<feature type="repeat" description="ANK 5">
    <location>
        <begin position="160"/>
        <end position="189"/>
    </location>
</feature>
<feature type="repeat" description="ANK 6">
    <location>
        <begin position="193"/>
        <end position="222"/>
    </location>
</feature>
<feature type="repeat" description="ANK 7">
    <location>
        <begin position="225"/>
        <end position="254"/>
    </location>
</feature>
<feature type="domain" description="SAM 1" evidence="5">
    <location>
        <begin position="810"/>
        <end position="876"/>
    </location>
</feature>
<feature type="domain" description="SAM 2" evidence="5">
    <location>
        <begin position="884"/>
        <end position="949"/>
    </location>
</feature>
<feature type="domain" description="PID" evidence="4">
    <location>
        <begin position="1056"/>
        <end position="1213"/>
    </location>
</feature>
<feature type="region of interest" description="Disordered" evidence="6">
    <location>
        <begin position="296"/>
        <end position="322"/>
    </location>
</feature>
<feature type="region of interest" description="Disordered" evidence="6">
    <location>
        <begin position="367"/>
        <end position="400"/>
    </location>
</feature>
<feature type="region of interest" description="Disordered" evidence="6">
    <location>
        <begin position="474"/>
        <end position="514"/>
    </location>
</feature>
<feature type="region of interest" description="Disordered" evidence="6">
    <location>
        <begin position="558"/>
        <end position="623"/>
    </location>
</feature>
<feature type="region of interest" description="Disordered" evidence="6">
    <location>
        <begin position="749"/>
        <end position="777"/>
    </location>
</feature>
<feature type="region of interest" description="Disordered" evidence="6">
    <location>
        <begin position="944"/>
        <end position="989"/>
    </location>
</feature>
<feature type="region of interest" description="Disordered" evidence="6">
    <location>
        <begin position="1197"/>
        <end position="1248"/>
    </location>
</feature>
<feature type="short sequence motif" description="Nuclear localization signal" evidence="13">
    <location>
        <begin position="935"/>
        <end position="938"/>
    </location>
</feature>
<feature type="compositionally biased region" description="Polar residues" evidence="6">
    <location>
        <begin position="305"/>
        <end position="322"/>
    </location>
</feature>
<feature type="compositionally biased region" description="Polar residues" evidence="6">
    <location>
        <begin position="371"/>
        <end position="384"/>
    </location>
</feature>
<feature type="compositionally biased region" description="Acidic residues" evidence="6">
    <location>
        <begin position="388"/>
        <end position="397"/>
    </location>
</feature>
<feature type="compositionally biased region" description="Low complexity" evidence="6">
    <location>
        <begin position="558"/>
        <end position="575"/>
    </location>
</feature>
<feature type="compositionally biased region" description="Basic and acidic residues" evidence="6">
    <location>
        <begin position="577"/>
        <end position="601"/>
    </location>
</feature>
<feature type="compositionally biased region" description="Polar residues" evidence="6">
    <location>
        <begin position="753"/>
        <end position="763"/>
    </location>
</feature>
<feature type="compositionally biased region" description="Low complexity" evidence="6">
    <location>
        <begin position="969"/>
        <end position="984"/>
    </location>
</feature>
<feature type="compositionally biased region" description="Basic and acidic residues" evidence="6">
    <location>
        <begin position="1236"/>
        <end position="1248"/>
    </location>
</feature>
<feature type="modified residue" description="Phosphoserine" evidence="3">
    <location>
        <position position="309"/>
    </location>
</feature>
<feature type="modified residue" description="Phosphoserine" evidence="3">
    <location>
        <position position="310"/>
    </location>
</feature>
<feature type="modified residue" description="Phosphoserine" evidence="3">
    <location>
        <position position="314"/>
    </location>
</feature>
<feature type="modified residue" description="Phosphoserine" evidence="3">
    <location>
        <position position="353"/>
    </location>
</feature>
<feature type="modified residue" description="Phosphoserine" evidence="2">
    <location>
        <position position="364"/>
    </location>
</feature>
<feature type="modified residue" description="Phosphothreonine" evidence="3">
    <location>
        <position position="503"/>
    </location>
</feature>
<feature type="modified residue" description="Phosphoserine" evidence="3">
    <location>
        <position position="507"/>
    </location>
</feature>
<feature type="modified residue" description="Phosphoserine" evidence="3">
    <location>
        <position position="510"/>
    </location>
</feature>
<feature type="modified residue" description="Phosphoserine" evidence="3">
    <location>
        <position position="738"/>
    </location>
</feature>
<feature type="modified residue" description="Phosphothreonine" evidence="2">
    <location>
        <position position="773"/>
    </location>
</feature>
<feature type="modified residue" description="Phosphoserine" evidence="2">
    <location>
        <position position="775"/>
    </location>
</feature>
<feature type="modified residue" description="Phosphotyrosine" evidence="3">
    <location>
        <position position="901"/>
    </location>
</feature>
<feature type="modified residue" description="Phosphoserine" evidence="3">
    <location>
        <position position="974"/>
    </location>
</feature>
<feature type="modified residue" description="Phosphotyrosine" evidence="3">
    <location>
        <position position="1007"/>
    </location>
</feature>
<feature type="splice variant" id="VSP_046414" description="In isoform 9." evidence="15">
    <location>
        <begin position="1"/>
        <end position="994"/>
    </location>
</feature>
<feature type="splice variant" id="VSP_032701" description="In isoform 8." evidence="17">
    <location>
        <begin position="1"/>
        <end position="831"/>
    </location>
</feature>
<feature type="splice variant" id="VSP_032702" description="In isoform 3, isoform 4, isoform 5, isoform 2 and isoform 7." evidence="14 15 16 17 18">
    <location>
        <begin position="1"/>
        <end position="774"/>
    </location>
</feature>
<feature type="splice variant" id="VSP_032703" description="In isoform 6." evidence="16">
    <location>
        <begin position="1"/>
        <end position="420"/>
    </location>
</feature>
<feature type="splice variant" id="VSP_046415" description="In isoform 10." evidence="15">
    <location>
        <begin position="3"/>
        <end position="807"/>
    </location>
</feature>
<feature type="splice variant" id="VSP_032704" description="In isoform 3, isoform 4, isoform 5, isoform 2 and isoform 7." evidence="14 15 16 17 18">
    <original>SFTSEWEEIDKIMSSIDVGINNELKEMNGETTR</original>
    <variation>MMWQCHLSAQDYRYYPVDGYSLLKRFPLHPLTG</variation>
    <location>
        <begin position="775"/>
        <end position="807"/>
    </location>
</feature>
<feature type="splice variant" id="VSP_032705" description="In isoform 6." evidence="16">
    <location>
        <begin position="804"/>
        <end position="807"/>
    </location>
</feature>
<feature type="splice variant" id="VSP_032706" description="In isoform 8." evidence="17">
    <original>VLKINLIGHRKRILASLGDRLHDDPPQKPPRSITLREPSGNHTPPQLSPSLSQSTYTTGGSLDVPHIIMQGDARRRRNENYFDDIPRSKLERQMAQ</original>
    <variation>QSSVCEIWTNQNAGFPFSAIHQVHN</variation>
    <location>
        <begin position="927"/>
        <end position="1022"/>
    </location>
</feature>
<feature type="splice variant" id="VSP_032707" description="In isoform 2, isoform 6, isoform 7 and isoform 10." evidence="14 15 16 17 18">
    <location>
        <begin position="963"/>
        <end position="1022"/>
    </location>
</feature>
<feature type="splice variant" id="VSP_032708" description="In isoform 5." evidence="17">
    <original>EPSGNHTPPQLSPSLSQSTYTTGGSLDVPHIIMQGDARRRRNENYFDDIPRSKLERQMAQ</original>
    <variation>SSVCEIWTNQNAGFPFSAIHQVHN</variation>
    <location>
        <begin position="963"/>
        <end position="1022"/>
    </location>
</feature>
<feature type="splice variant" id="VSP_032709" description="In isoform 3." evidence="15 17">
    <original>Q</original>
    <variation>QSSVCEIWTNQNAGFPFSAIHQVHN</variation>
    <location>
        <position position="1022"/>
    </location>
</feature>
<feature type="splice variant" id="VSP_032710" description="In isoform 3, isoform 5 and isoform 2." evidence="15 17 18">
    <original>DLLHASHTGQEPSERHTEEALRKF</original>
    <variation>QIDPSEQKTLANLPWIVEPGQEAKRGINTKYETTIF</variation>
    <location>
        <begin position="1225"/>
        <end position="1248"/>
    </location>
</feature>
<feature type="splice variant" id="VSP_032711" description="In isoform 4." evidence="16">
    <original>DLLHASHTGQEPSERHTEEALRKF</original>
    <variation>PFCFKADRPI</variation>
    <location>
        <begin position="1225"/>
        <end position="1248"/>
    </location>
</feature>
<feature type="splice variant" id="VSP_032712" description="In isoform 8 and isoform 10." evidence="15 17">
    <original>DLLHASHTGQEPSERHTEEALRK</original>
    <variation>IDPSEQKTLANLPWIVEPGQEAKRGINTKYETTI</variation>
    <location>
        <begin position="1225"/>
        <end position="1247"/>
    </location>
</feature>
<feature type="sequence conflict" description="In Ref. 1; AAP37612." evidence="19" ref="1">
    <original>RS</original>
    <variation>KYA</variation>
    <location>
        <begin position="290"/>
        <end position="291"/>
    </location>
</feature>
<feature type="sequence conflict" description="In Ref. 4; BAF82457." evidence="19" ref="4">
    <original>Q</original>
    <variation>L</variation>
    <location>
        <position position="813"/>
    </location>
</feature>
<feature type="sequence conflict" description="In Ref. 6; AAI42670." evidence="19" ref="6">
    <original>E</original>
    <variation>G</variation>
    <location>
        <position position="854"/>
    </location>
</feature>
<feature type="sequence conflict" description="In Ref. 4; BAG57507." evidence="19" ref="4">
    <original>C</original>
    <variation>R</variation>
    <location>
        <position position="1160"/>
    </location>
</feature>
<feature type="sequence conflict" description="In Ref. 4; BAG58059." evidence="19" ref="4">
    <original>D</original>
    <variation>G</variation>
    <location>
        <position position="1167"/>
    </location>
</feature>
<feature type="helix" evidence="20">
    <location>
        <begin position="815"/>
        <end position="822"/>
    </location>
</feature>
<feature type="helix" evidence="20">
    <location>
        <begin position="825"/>
        <end position="827"/>
    </location>
</feature>
<feature type="helix" evidence="20">
    <location>
        <begin position="828"/>
        <end position="833"/>
    </location>
</feature>
<feature type="turn" evidence="21">
    <location>
        <begin position="834"/>
        <end position="837"/>
    </location>
</feature>
<feature type="turn" evidence="20">
    <location>
        <begin position="839"/>
        <end position="841"/>
    </location>
</feature>
<feature type="strand" evidence="20">
    <location>
        <begin position="842"/>
        <end position="847"/>
    </location>
</feature>
<feature type="helix" evidence="20">
    <location>
        <begin position="851"/>
        <end position="854"/>
    </location>
</feature>
<feature type="helix" evidence="20">
    <location>
        <begin position="860"/>
        <end position="872"/>
    </location>
</feature>
<feature type="helix" evidence="21">
    <location>
        <begin position="889"/>
        <end position="894"/>
    </location>
</feature>
<feature type="turn" evidence="21">
    <location>
        <begin position="895"/>
        <end position="897"/>
    </location>
</feature>
<feature type="helix" evidence="21">
    <location>
        <begin position="901"/>
        <end position="908"/>
    </location>
</feature>
<feature type="helix" evidence="21">
    <location>
        <begin position="913"/>
        <end position="916"/>
    </location>
</feature>
<feature type="helix" evidence="21">
    <location>
        <begin position="921"/>
        <end position="927"/>
    </location>
</feature>
<feature type="helix" evidence="21">
    <location>
        <begin position="933"/>
        <end position="943"/>
    </location>
</feature>
<feature type="turn" evidence="22">
    <location>
        <begin position="1056"/>
        <end position="1058"/>
    </location>
</feature>
<feature type="strand" evidence="22">
    <location>
        <begin position="1059"/>
        <end position="1074"/>
    </location>
</feature>
<feature type="helix" evidence="22">
    <location>
        <begin position="1078"/>
        <end position="1091"/>
    </location>
</feature>
<feature type="strand" evidence="22">
    <location>
        <begin position="1094"/>
        <end position="1097"/>
    </location>
</feature>
<feature type="strand" evidence="22">
    <location>
        <begin position="1104"/>
        <end position="1110"/>
    </location>
</feature>
<feature type="strand" evidence="22">
    <location>
        <begin position="1113"/>
        <end position="1121"/>
    </location>
</feature>
<feature type="strand" evidence="22">
    <location>
        <begin position="1124"/>
        <end position="1128"/>
    </location>
</feature>
<feature type="helix" evidence="22">
    <location>
        <begin position="1130"/>
        <end position="1132"/>
    </location>
</feature>
<feature type="strand" evidence="22">
    <location>
        <begin position="1133"/>
        <end position="1138"/>
    </location>
</feature>
<feature type="strand" evidence="22">
    <location>
        <begin position="1145"/>
        <end position="1150"/>
    </location>
</feature>
<feature type="turn" evidence="22">
    <location>
        <begin position="1153"/>
        <end position="1155"/>
    </location>
</feature>
<feature type="strand" evidence="22">
    <location>
        <begin position="1156"/>
        <end position="1167"/>
    </location>
</feature>
<feature type="helix" evidence="22">
    <location>
        <begin position="1168"/>
        <end position="1186"/>
    </location>
</feature>
<feature type="sequence conflict" description="In Ref. 6; AAH68451." evidence="19" ref="6">
    <original>P</original>
    <variation>R</variation>
    <location sequence="Q7Z6G8-8">
        <position position="325"/>
    </location>
</feature>
<sequence>MGKDQELLEAARTGNVALVEKLLSGRKGGILGGGSGPLPLSNLLSIWRGPNVNCTDSSGYTALHHAALNGHKDIVLKLLQYEASTNVADNKGYFPIHLAAWKGDVEIVKILIHHGPSHSRVNEQNNENETALHCAAQYGHSEVVAVLLEELTDPTIRNSKLETPLDLAALYGRLRVVKMIISAHPNLMSCNTRKHTPLHLAARNGHKAVVQVLLEAGMDVSCQTEKGSALHEAALFGKVDVVRVLLETGIDANIKDSLGRTVLDILKEHPSQKSLQIATLLQEYLEGVGRSTVLEEPVQEDATQETHISSPVESPSQKTKSETVTGELSKLLDEIKLCQEKDYSFEDLCHTISDHYLDNLSKISEEELGKNGSQSVRTSSTINLSPGEVEEEDDDENTCGPSGLWEALTPCNGCRNLGFPMLAQESYPKKRNYTMEIVPSASLDTFPSENENFLCDLMDTAVTKKPCSLEIARAPSPRTDNASEVAVTTPGTSNHRNSSTGPTPDCSPPSPDTALKNIVKVIRPQPKQRTSIVSSLDFHRMNHNQEYFEINTSTGCTSFTASPPASPPTSSVGTTEVKNEGTNHTDDLSRQDDNDPPKEYDPGQFAGLLHGSSPACESPENPFHLYGKREQCEKGQDEVSLANSPLPFKQSPIENNSEPLVKKIKPKVVSRTIFHKKSNQLENHTIVGTRSTRSGSRNGDQWVMNAGGFVERACTLGRIRSLPKALIDMHLSKSVSKSDSDLIAYPSNEKTSRVNWSESSTAEHSSKGNSERTPSFTSEWEEIDKIMSSIDVGINNELKEMNGETTRPRCPVQTVGQWLESIGLPQYENHLMANGFDNVQFMGSNVMEDQDLLEIGILNSGHRQRILQAIQLLPKMRPIGHDGYHPTSVAEWLDSIELGDYTKAFLINGYTSMDLLKKIWEVELINVLKINLIGHRKRILASLGDRLHDDPPQKPPRSITLREPSGNHTPPQLSPSLSQSTYTTGGSLDVPHIIMQGDARRRRNENYFDDIPRSKLERQMAQTGDWGEPSITLRPPNEATASTPVQYWQHHPEKLIFQSCDYKAFYLGSMLIKELRGTESTQDACAKMRANCQKSTEQMKKVPTIILSVSYKGVKFIDATNKNIIAEHEIRNISCAAQDPEDLSTFAYITKDLKSNHHYCHVFTAFDVNLAYEIILTLGQAFEVAYQLALQARKGGHSSTLPESFENKPSKPIPKPRVSIRKSVDLLHASHTGQEPSERHTEEALRKF</sequence>
<protein>
    <recommendedName>
        <fullName>Ankyrin repeat and sterile alpha motif domain-containing protein 1B</fullName>
    </recommendedName>
    <alternativeName>
        <fullName>Amyloid-beta protein intracellular domain-associated protein 1</fullName>
        <shortName>AIDA-1</shortName>
    </alternativeName>
    <alternativeName>
        <fullName>E2A-PBX1-associated protein</fullName>
        <shortName>EB-1</shortName>
    </alternativeName>
</protein>
<evidence type="ECO:0000250" key="1"/>
<evidence type="ECO:0000250" key="2">
    <source>
        <dbReference type="UniProtKB" id="P0C6S7"/>
    </source>
</evidence>
<evidence type="ECO:0000250" key="3">
    <source>
        <dbReference type="UniProtKB" id="Q8BIZ1"/>
    </source>
</evidence>
<evidence type="ECO:0000255" key="4">
    <source>
        <dbReference type="PROSITE-ProRule" id="PRU00148"/>
    </source>
</evidence>
<evidence type="ECO:0000255" key="5">
    <source>
        <dbReference type="PROSITE-ProRule" id="PRU00184"/>
    </source>
</evidence>
<evidence type="ECO:0000256" key="6">
    <source>
        <dbReference type="SAM" id="MobiDB-lite"/>
    </source>
</evidence>
<evidence type="ECO:0000269" key="7">
    <source>
    </source>
</evidence>
<evidence type="ECO:0000269" key="8">
    <source>
    </source>
</evidence>
<evidence type="ECO:0000269" key="9">
    <source>
    </source>
</evidence>
<evidence type="ECO:0000269" key="10">
    <source>
    </source>
</evidence>
<evidence type="ECO:0000269" key="11">
    <source>
    </source>
</evidence>
<evidence type="ECO:0000269" key="12">
    <source>
    </source>
</evidence>
<evidence type="ECO:0000269" key="13">
    <source>
    </source>
</evidence>
<evidence type="ECO:0000303" key="14">
    <source>
    </source>
</evidence>
<evidence type="ECO:0000303" key="15">
    <source>
    </source>
</evidence>
<evidence type="ECO:0000303" key="16">
    <source>
    </source>
</evidence>
<evidence type="ECO:0000303" key="17">
    <source>
    </source>
</evidence>
<evidence type="ECO:0000303" key="18">
    <source>
    </source>
</evidence>
<evidence type="ECO:0000305" key="19"/>
<evidence type="ECO:0007829" key="20">
    <source>
        <dbReference type="PDB" id="2EAM"/>
    </source>
</evidence>
<evidence type="ECO:0007829" key="21">
    <source>
        <dbReference type="PDB" id="2KIV"/>
    </source>
</evidence>
<evidence type="ECO:0007829" key="22">
    <source>
        <dbReference type="PDB" id="2M38"/>
    </source>
</evidence>